<feature type="chain" id="PRO_0000396536" description="Lon protease">
    <location>
        <begin position="1"/>
        <end position="794"/>
    </location>
</feature>
<feature type="domain" description="Lon N-terminal" evidence="3">
    <location>
        <begin position="29"/>
        <end position="222"/>
    </location>
</feature>
<feature type="domain" description="Lon proteolytic" evidence="2">
    <location>
        <begin position="610"/>
        <end position="791"/>
    </location>
</feature>
<feature type="active site" evidence="1">
    <location>
        <position position="697"/>
    </location>
</feature>
<feature type="active site" evidence="1">
    <location>
        <position position="740"/>
    </location>
</feature>
<feature type="binding site" evidence="1">
    <location>
        <begin position="374"/>
        <end position="381"/>
    </location>
    <ligand>
        <name>ATP</name>
        <dbReference type="ChEBI" id="CHEBI:30616"/>
    </ligand>
</feature>
<organism>
    <name type="scientific">Bacillus thuringiensis (strain Al Hakam)</name>
    <dbReference type="NCBI Taxonomy" id="412694"/>
    <lineage>
        <taxon>Bacteria</taxon>
        <taxon>Bacillati</taxon>
        <taxon>Bacillota</taxon>
        <taxon>Bacilli</taxon>
        <taxon>Bacillales</taxon>
        <taxon>Bacillaceae</taxon>
        <taxon>Bacillus</taxon>
        <taxon>Bacillus cereus group</taxon>
    </lineage>
</organism>
<accession>A0RJ87</accession>
<keyword id="KW-0067">ATP-binding</keyword>
<keyword id="KW-0963">Cytoplasm</keyword>
<keyword id="KW-0378">Hydrolase</keyword>
<keyword id="KW-0547">Nucleotide-binding</keyword>
<keyword id="KW-0645">Protease</keyword>
<keyword id="KW-0720">Serine protease</keyword>
<keyword id="KW-0346">Stress response</keyword>
<proteinExistence type="inferred from homology"/>
<dbReference type="EC" id="3.4.21.53" evidence="1"/>
<dbReference type="EMBL" id="CP000485">
    <property type="protein sequence ID" value="ABK87280.1"/>
    <property type="molecule type" value="Genomic_DNA"/>
</dbReference>
<dbReference type="SMR" id="A0RJ87"/>
<dbReference type="MEROPS" id="S16.001"/>
<dbReference type="KEGG" id="btl:BALH_4063"/>
<dbReference type="HOGENOM" id="CLU_004109_4_3_9"/>
<dbReference type="GO" id="GO:0005737">
    <property type="term" value="C:cytoplasm"/>
    <property type="evidence" value="ECO:0007669"/>
    <property type="project" value="UniProtKB-SubCell"/>
</dbReference>
<dbReference type="GO" id="GO:0005524">
    <property type="term" value="F:ATP binding"/>
    <property type="evidence" value="ECO:0007669"/>
    <property type="project" value="UniProtKB-UniRule"/>
</dbReference>
<dbReference type="GO" id="GO:0016887">
    <property type="term" value="F:ATP hydrolysis activity"/>
    <property type="evidence" value="ECO:0007669"/>
    <property type="project" value="UniProtKB-UniRule"/>
</dbReference>
<dbReference type="GO" id="GO:0004176">
    <property type="term" value="F:ATP-dependent peptidase activity"/>
    <property type="evidence" value="ECO:0007669"/>
    <property type="project" value="UniProtKB-UniRule"/>
</dbReference>
<dbReference type="GO" id="GO:0043565">
    <property type="term" value="F:sequence-specific DNA binding"/>
    <property type="evidence" value="ECO:0007669"/>
    <property type="project" value="UniProtKB-UniRule"/>
</dbReference>
<dbReference type="GO" id="GO:0004252">
    <property type="term" value="F:serine-type endopeptidase activity"/>
    <property type="evidence" value="ECO:0007669"/>
    <property type="project" value="UniProtKB-UniRule"/>
</dbReference>
<dbReference type="GO" id="GO:0034605">
    <property type="term" value="P:cellular response to heat"/>
    <property type="evidence" value="ECO:0007669"/>
    <property type="project" value="UniProtKB-UniRule"/>
</dbReference>
<dbReference type="GO" id="GO:0006515">
    <property type="term" value="P:protein quality control for misfolded or incompletely synthesized proteins"/>
    <property type="evidence" value="ECO:0007669"/>
    <property type="project" value="UniProtKB-UniRule"/>
</dbReference>
<dbReference type="CDD" id="cd19500">
    <property type="entry name" value="RecA-like_Lon"/>
    <property type="match status" value="1"/>
</dbReference>
<dbReference type="FunFam" id="2.30.130.40:FF:000001">
    <property type="entry name" value="Lon protease"/>
    <property type="match status" value="1"/>
</dbReference>
<dbReference type="FunFam" id="3.30.230.10:FF:000010">
    <property type="entry name" value="Lon protease"/>
    <property type="match status" value="1"/>
</dbReference>
<dbReference type="FunFam" id="1.20.5.5270:FF:000002">
    <property type="entry name" value="Lon protease homolog"/>
    <property type="match status" value="1"/>
</dbReference>
<dbReference type="FunFam" id="3.40.50.300:FF:000382">
    <property type="entry name" value="Lon protease homolog 2, peroxisomal"/>
    <property type="match status" value="1"/>
</dbReference>
<dbReference type="Gene3D" id="1.10.8.60">
    <property type="match status" value="1"/>
</dbReference>
<dbReference type="Gene3D" id="1.20.5.5270">
    <property type="match status" value="1"/>
</dbReference>
<dbReference type="Gene3D" id="1.20.58.1480">
    <property type="match status" value="1"/>
</dbReference>
<dbReference type="Gene3D" id="3.30.230.10">
    <property type="match status" value="1"/>
</dbReference>
<dbReference type="Gene3D" id="2.30.130.40">
    <property type="entry name" value="LON domain-like"/>
    <property type="match status" value="1"/>
</dbReference>
<dbReference type="Gene3D" id="3.40.50.300">
    <property type="entry name" value="P-loop containing nucleotide triphosphate hydrolases"/>
    <property type="match status" value="1"/>
</dbReference>
<dbReference type="HAMAP" id="MF_01973">
    <property type="entry name" value="lon_bact"/>
    <property type="match status" value="1"/>
</dbReference>
<dbReference type="InterPro" id="IPR003593">
    <property type="entry name" value="AAA+_ATPase"/>
</dbReference>
<dbReference type="InterPro" id="IPR003959">
    <property type="entry name" value="ATPase_AAA_core"/>
</dbReference>
<dbReference type="InterPro" id="IPR027543">
    <property type="entry name" value="Lon_bac"/>
</dbReference>
<dbReference type="InterPro" id="IPR004815">
    <property type="entry name" value="Lon_bac/euk-typ"/>
</dbReference>
<dbReference type="InterPro" id="IPR054594">
    <property type="entry name" value="Lon_lid"/>
</dbReference>
<dbReference type="InterPro" id="IPR008269">
    <property type="entry name" value="Lon_proteolytic"/>
</dbReference>
<dbReference type="InterPro" id="IPR027065">
    <property type="entry name" value="Lon_Prtase"/>
</dbReference>
<dbReference type="InterPro" id="IPR003111">
    <property type="entry name" value="Lon_prtase_N"/>
</dbReference>
<dbReference type="InterPro" id="IPR046336">
    <property type="entry name" value="Lon_prtase_N_sf"/>
</dbReference>
<dbReference type="InterPro" id="IPR027417">
    <property type="entry name" value="P-loop_NTPase"/>
</dbReference>
<dbReference type="InterPro" id="IPR008268">
    <property type="entry name" value="Peptidase_S16_AS"/>
</dbReference>
<dbReference type="InterPro" id="IPR015947">
    <property type="entry name" value="PUA-like_sf"/>
</dbReference>
<dbReference type="InterPro" id="IPR020568">
    <property type="entry name" value="Ribosomal_Su5_D2-typ_SF"/>
</dbReference>
<dbReference type="InterPro" id="IPR014721">
    <property type="entry name" value="Ribsml_uS5_D2-typ_fold_subgr"/>
</dbReference>
<dbReference type="NCBIfam" id="TIGR00763">
    <property type="entry name" value="lon"/>
    <property type="match status" value="1"/>
</dbReference>
<dbReference type="NCBIfam" id="NF008053">
    <property type="entry name" value="PRK10787.1"/>
    <property type="match status" value="1"/>
</dbReference>
<dbReference type="PANTHER" id="PTHR10046">
    <property type="entry name" value="ATP DEPENDENT LON PROTEASE FAMILY MEMBER"/>
    <property type="match status" value="1"/>
</dbReference>
<dbReference type="Pfam" id="PF00004">
    <property type="entry name" value="AAA"/>
    <property type="match status" value="1"/>
</dbReference>
<dbReference type="Pfam" id="PF05362">
    <property type="entry name" value="Lon_C"/>
    <property type="match status" value="1"/>
</dbReference>
<dbReference type="Pfam" id="PF22667">
    <property type="entry name" value="Lon_lid"/>
    <property type="match status" value="1"/>
</dbReference>
<dbReference type="Pfam" id="PF02190">
    <property type="entry name" value="LON_substr_bdg"/>
    <property type="match status" value="1"/>
</dbReference>
<dbReference type="PIRSF" id="PIRSF001174">
    <property type="entry name" value="Lon_proteas"/>
    <property type="match status" value="1"/>
</dbReference>
<dbReference type="PRINTS" id="PR00830">
    <property type="entry name" value="ENDOLAPTASE"/>
</dbReference>
<dbReference type="SMART" id="SM00382">
    <property type="entry name" value="AAA"/>
    <property type="match status" value="1"/>
</dbReference>
<dbReference type="SMART" id="SM00464">
    <property type="entry name" value="LON"/>
    <property type="match status" value="1"/>
</dbReference>
<dbReference type="SUPFAM" id="SSF52540">
    <property type="entry name" value="P-loop containing nucleoside triphosphate hydrolases"/>
    <property type="match status" value="1"/>
</dbReference>
<dbReference type="SUPFAM" id="SSF88697">
    <property type="entry name" value="PUA domain-like"/>
    <property type="match status" value="1"/>
</dbReference>
<dbReference type="SUPFAM" id="SSF54211">
    <property type="entry name" value="Ribosomal protein S5 domain 2-like"/>
    <property type="match status" value="1"/>
</dbReference>
<dbReference type="PROSITE" id="PS51787">
    <property type="entry name" value="LON_N"/>
    <property type="match status" value="1"/>
</dbReference>
<dbReference type="PROSITE" id="PS51786">
    <property type="entry name" value="LON_PROTEOLYTIC"/>
    <property type="match status" value="1"/>
</dbReference>
<dbReference type="PROSITE" id="PS01046">
    <property type="entry name" value="LON_SER"/>
    <property type="match status" value="1"/>
</dbReference>
<protein>
    <recommendedName>
        <fullName evidence="1">Lon protease</fullName>
        <ecNumber evidence="1">3.4.21.53</ecNumber>
    </recommendedName>
    <alternativeName>
        <fullName evidence="1">ATP-dependent protease La</fullName>
    </alternativeName>
</protein>
<sequence>MYCNIKWLNRSLIYYGGAMSSMNTNERIVPLLPLRGVLVYPTMVLHLDVGRDKSIQALEQAAMDENIIFLAMQKEMNIDDPKEDDIYSVGTVAKVKQMLKLPNGTLRVLVEGLHRAEVVEFIEEENVVQVSIKTVTEEVEADLEEKALMRTLLEHFEQYIKVSKKVSNETFATVADVEEPGRLADLIASHLPIKTKQKQEILEIISVKERLHTLISIIQDEQELLSLEKKIGQKVKRSMERTQKEYFLREQMKAIQTELGDKEGKGGEVEELREKIEQSGMPEETMKAALKELDRYEKLPASSAESGVIRNYMDWLLALPWTDATEDMIDLAHSEEILNKDHYGLEKVKERVLEYLAVQKLTNSLKGPILCLVGPPGVGKTSLARSIATSLNRNFVRVSLGGVRDESEIRGHRRTYVGAMPGRIIQGMKKAKSVNPVFLLDEIDKMSNDFRGDPSAALLEVLDPEQNHNFSDHYIEEPYDLSKVMFVATANTLSSIPGPLLDRMEIISIAGYTELEKVHIAREHLLPKQLQEHGLRKGNLQVRDEALLEIIRYYTREAGVRTLERQIAKVCRKAAKIIVTAERKRIVVTEKNVVDLLGKHIFRYGQAEKTDQVGMATGLAYTAAGGDTLAIEVSVAPGKGKLILTGKLGDVMKESAQAAFSYIRSRAEELQIDPDFHEKNDIHIHVPEGAVPKDGPSAGITMATALISALTGIPVSKEVGMTGEITLRGRVLPIGGLKEKTLSAHRAGLTKIILPAENEKDLDDIPESVKENLTFVLASHLDEVLEHALVGVKQ</sequence>
<name>LON_BACAH</name>
<comment type="function">
    <text evidence="1">ATP-dependent serine protease that mediates the selective degradation of mutant and abnormal proteins as well as certain short-lived regulatory proteins. Required for cellular homeostasis and for survival from DNA damage and developmental changes induced by stress. Degrades polypeptides processively to yield small peptide fragments that are 5 to 10 amino acids long. Binds to DNA in a double-stranded, site-specific manner.</text>
</comment>
<comment type="catalytic activity">
    <reaction evidence="1">
        <text>Hydrolysis of proteins in presence of ATP.</text>
        <dbReference type="EC" id="3.4.21.53"/>
    </reaction>
</comment>
<comment type="subunit">
    <text evidence="1">Homohexamer. Organized in a ring with a central cavity.</text>
</comment>
<comment type="subcellular location">
    <subcellularLocation>
        <location evidence="1">Cytoplasm</location>
    </subcellularLocation>
</comment>
<comment type="induction">
    <text evidence="1">By heat shock.</text>
</comment>
<comment type="similarity">
    <text evidence="1">Belongs to the peptidase S16 family.</text>
</comment>
<gene>
    <name evidence="1" type="primary">lon</name>
    <name type="ordered locus">BALH_4063</name>
</gene>
<reference key="1">
    <citation type="journal article" date="2007" name="J. Bacteriol.">
        <title>The complete genome sequence of Bacillus thuringiensis Al Hakam.</title>
        <authorList>
            <person name="Challacombe J.F."/>
            <person name="Altherr M.R."/>
            <person name="Xie G."/>
            <person name="Bhotika S.S."/>
            <person name="Brown N."/>
            <person name="Bruce D."/>
            <person name="Campbell C.S."/>
            <person name="Campbell M.L."/>
            <person name="Chen J."/>
            <person name="Chertkov O."/>
            <person name="Cleland C."/>
            <person name="Dimitrijevic M."/>
            <person name="Doggett N.A."/>
            <person name="Fawcett J.J."/>
            <person name="Glavina T."/>
            <person name="Goodwin L.A."/>
            <person name="Green L.D."/>
            <person name="Han C.S."/>
            <person name="Hill K.K."/>
            <person name="Hitchcock P."/>
            <person name="Jackson P.J."/>
            <person name="Keim P."/>
            <person name="Kewalramani A.R."/>
            <person name="Longmire J."/>
            <person name="Lucas S."/>
            <person name="Malfatti S."/>
            <person name="Martinez D."/>
            <person name="McMurry K."/>
            <person name="Meincke L.J."/>
            <person name="Misra M."/>
            <person name="Moseman B.L."/>
            <person name="Mundt M."/>
            <person name="Munk A.C."/>
            <person name="Okinaka R.T."/>
            <person name="Parson-Quintana B."/>
            <person name="Reilly L.P."/>
            <person name="Richardson P."/>
            <person name="Robinson D.L."/>
            <person name="Saunders E."/>
            <person name="Tapia R."/>
            <person name="Tesmer J.G."/>
            <person name="Thayer N."/>
            <person name="Thompson L.S."/>
            <person name="Tice H."/>
            <person name="Ticknor L.O."/>
            <person name="Wills P.L."/>
            <person name="Gilna P."/>
            <person name="Brettin T.S."/>
        </authorList>
    </citation>
    <scope>NUCLEOTIDE SEQUENCE [LARGE SCALE GENOMIC DNA]</scope>
    <source>
        <strain>Al Hakam</strain>
    </source>
</reference>
<evidence type="ECO:0000255" key="1">
    <source>
        <dbReference type="HAMAP-Rule" id="MF_01973"/>
    </source>
</evidence>
<evidence type="ECO:0000255" key="2">
    <source>
        <dbReference type="PROSITE-ProRule" id="PRU01122"/>
    </source>
</evidence>
<evidence type="ECO:0000255" key="3">
    <source>
        <dbReference type="PROSITE-ProRule" id="PRU01123"/>
    </source>
</evidence>